<name>RP13A_SCHPO</name>
<protein>
    <recommendedName>
        <fullName evidence="1">Proteasomal ubiquitin receptor ADRM1 homolog rpn1301</fullName>
    </recommendedName>
    <alternativeName>
        <fullName evidence="7">Regulatory particle non-ATPase 13a protein</fullName>
    </alternativeName>
</protein>
<reference key="1">
    <citation type="journal article" date="2002" name="Nature">
        <title>The genome sequence of Schizosaccharomyces pombe.</title>
        <authorList>
            <person name="Wood V."/>
            <person name="Gwilliam R."/>
            <person name="Rajandream M.A."/>
            <person name="Lyne M.H."/>
            <person name="Lyne R."/>
            <person name="Stewart A."/>
            <person name="Sgouros J.G."/>
            <person name="Peat N."/>
            <person name="Hayles J."/>
            <person name="Baker S.G."/>
            <person name="Basham D."/>
            <person name="Bowman S."/>
            <person name="Brooks K."/>
            <person name="Brown D."/>
            <person name="Brown S."/>
            <person name="Chillingworth T."/>
            <person name="Churcher C.M."/>
            <person name="Collins M."/>
            <person name="Connor R."/>
            <person name="Cronin A."/>
            <person name="Davis P."/>
            <person name="Feltwell T."/>
            <person name="Fraser A."/>
            <person name="Gentles S."/>
            <person name="Goble A."/>
            <person name="Hamlin N."/>
            <person name="Harris D.E."/>
            <person name="Hidalgo J."/>
            <person name="Hodgson G."/>
            <person name="Holroyd S."/>
            <person name="Hornsby T."/>
            <person name="Howarth S."/>
            <person name="Huckle E.J."/>
            <person name="Hunt S."/>
            <person name="Jagels K."/>
            <person name="James K.D."/>
            <person name="Jones L."/>
            <person name="Jones M."/>
            <person name="Leather S."/>
            <person name="McDonald S."/>
            <person name="McLean J."/>
            <person name="Mooney P."/>
            <person name="Moule S."/>
            <person name="Mungall K.L."/>
            <person name="Murphy L.D."/>
            <person name="Niblett D."/>
            <person name="Odell C."/>
            <person name="Oliver K."/>
            <person name="O'Neil S."/>
            <person name="Pearson D."/>
            <person name="Quail M.A."/>
            <person name="Rabbinowitsch E."/>
            <person name="Rutherford K.M."/>
            <person name="Rutter S."/>
            <person name="Saunders D."/>
            <person name="Seeger K."/>
            <person name="Sharp S."/>
            <person name="Skelton J."/>
            <person name="Simmonds M.N."/>
            <person name="Squares R."/>
            <person name="Squares S."/>
            <person name="Stevens K."/>
            <person name="Taylor K."/>
            <person name="Taylor R.G."/>
            <person name="Tivey A."/>
            <person name="Walsh S.V."/>
            <person name="Warren T."/>
            <person name="Whitehead S."/>
            <person name="Woodward J.R."/>
            <person name="Volckaert G."/>
            <person name="Aert R."/>
            <person name="Robben J."/>
            <person name="Grymonprez B."/>
            <person name="Weltjens I."/>
            <person name="Vanstreels E."/>
            <person name="Rieger M."/>
            <person name="Schaefer M."/>
            <person name="Mueller-Auer S."/>
            <person name="Gabel C."/>
            <person name="Fuchs M."/>
            <person name="Duesterhoeft A."/>
            <person name="Fritzc C."/>
            <person name="Holzer E."/>
            <person name="Moestl D."/>
            <person name="Hilbert H."/>
            <person name="Borzym K."/>
            <person name="Langer I."/>
            <person name="Beck A."/>
            <person name="Lehrach H."/>
            <person name="Reinhardt R."/>
            <person name="Pohl T.M."/>
            <person name="Eger P."/>
            <person name="Zimmermann W."/>
            <person name="Wedler H."/>
            <person name="Wambutt R."/>
            <person name="Purnelle B."/>
            <person name="Goffeau A."/>
            <person name="Cadieu E."/>
            <person name="Dreano S."/>
            <person name="Gloux S."/>
            <person name="Lelaure V."/>
            <person name="Mottier S."/>
            <person name="Galibert F."/>
            <person name="Aves S.J."/>
            <person name="Xiang Z."/>
            <person name="Hunt C."/>
            <person name="Moore K."/>
            <person name="Hurst S.M."/>
            <person name="Lucas M."/>
            <person name="Rochet M."/>
            <person name="Gaillardin C."/>
            <person name="Tallada V.A."/>
            <person name="Garzon A."/>
            <person name="Thode G."/>
            <person name="Daga R.R."/>
            <person name="Cruzado L."/>
            <person name="Jimenez J."/>
            <person name="Sanchez M."/>
            <person name="del Rey F."/>
            <person name="Benito J."/>
            <person name="Dominguez A."/>
            <person name="Revuelta J.L."/>
            <person name="Moreno S."/>
            <person name="Armstrong J."/>
            <person name="Forsburg S.L."/>
            <person name="Cerutti L."/>
            <person name="Lowe T."/>
            <person name="McCombie W.R."/>
            <person name="Paulsen I."/>
            <person name="Potashkin J."/>
            <person name="Shpakovski G.V."/>
            <person name="Ussery D."/>
            <person name="Barrell B.G."/>
            <person name="Nurse P."/>
        </authorList>
    </citation>
    <scope>NUCLEOTIDE SEQUENCE [LARGE SCALE GENOMIC DNA]</scope>
    <source>
        <strain>972 / ATCC 24843</strain>
    </source>
</reference>
<reference key="2">
    <citation type="journal article" date="2006" name="Nat. Biotechnol.">
        <title>ORFeome cloning and global analysis of protein localization in the fission yeast Schizosaccharomyces pombe.</title>
        <authorList>
            <person name="Matsuyama A."/>
            <person name="Arai R."/>
            <person name="Yashiroda Y."/>
            <person name="Shirai A."/>
            <person name="Kamata A."/>
            <person name="Sekido S."/>
            <person name="Kobayashi Y."/>
            <person name="Hashimoto A."/>
            <person name="Hamamoto M."/>
            <person name="Hiraoka Y."/>
            <person name="Horinouchi S."/>
            <person name="Yoshida M."/>
        </authorList>
    </citation>
    <scope>SUBCELLULAR LOCATION [LARGE SCALE ANALYSIS]</scope>
</reference>
<reference key="3">
    <citation type="journal article" date="2010" name="Proc. Natl. Acad. Sci. U.S.A.">
        <title>Structure of the 26S proteasome from Schizosaccharomyces pombe at subnanometer resolution.</title>
        <authorList>
            <person name="Bohn S."/>
            <person name="Beck F."/>
            <person name="Sakata E."/>
            <person name="Walzthoeni T."/>
            <person name="Beck M."/>
            <person name="Aebersold R."/>
            <person name="Foerster F."/>
            <person name="Baumeister W."/>
            <person name="Nickell S."/>
        </authorList>
    </citation>
    <scope>SUBUNIT</scope>
    <scope>FUNCTION</scope>
</reference>
<evidence type="ECO:0000250" key="1">
    <source>
        <dbReference type="UniProtKB" id="Q16186"/>
    </source>
</evidence>
<evidence type="ECO:0000255" key="2">
    <source>
        <dbReference type="PROSITE-ProRule" id="PRU01264"/>
    </source>
</evidence>
<evidence type="ECO:0000255" key="3">
    <source>
        <dbReference type="PROSITE-ProRule" id="PRU01265"/>
    </source>
</evidence>
<evidence type="ECO:0000256" key="4">
    <source>
        <dbReference type="SAM" id="MobiDB-lite"/>
    </source>
</evidence>
<evidence type="ECO:0000269" key="5">
    <source>
    </source>
</evidence>
<evidence type="ECO:0000269" key="6">
    <source>
    </source>
</evidence>
<evidence type="ECO:0000303" key="7">
    <source>
    </source>
</evidence>
<evidence type="ECO:0000305" key="8"/>
<evidence type="ECO:0000305" key="9">
    <source>
    </source>
</evidence>
<sequence>MSLITFKAGKLRRVPGTKLLRADPEKGYIVMNRDAYGLIHFQWAKRNDLENPEDDIIVFSSECTFEKVTECTTGRAYMLKYPSSAHSLFYWMQEASDDNDTSYAERINSYIKDQDLLDPARSDVATVSDMMEVDTVEQSEPIAQPTESSKESSEIGAPNSDEINSSEAVRNLLATISAQAGFGGSTVDLCEILKPSNLTDLLCQEGVIDRLMPYMPPDTPNNLEGVLAIVSSPQYAQALRSFSQALNSPGGVNIISALGLSLDESANPNEGGALQFLKAIARFVSRNNGSE</sequence>
<feature type="chain" id="PRO_0000351079" description="Proteasomal ubiquitin receptor ADRM1 homolog rpn1301">
    <location>
        <begin position="1"/>
        <end position="291"/>
    </location>
</feature>
<feature type="domain" description="Pru" evidence="3">
    <location>
        <begin position="1"/>
        <end position="114"/>
    </location>
</feature>
<feature type="domain" description="DEUBAD" evidence="2">
    <location>
        <begin position="178"/>
        <end position="290"/>
    </location>
</feature>
<feature type="region of interest" description="Disordered" evidence="4">
    <location>
        <begin position="135"/>
        <end position="162"/>
    </location>
</feature>
<gene>
    <name type="primary">rpn1301</name>
    <name evidence="7" type="synonym">rpn13a</name>
    <name type="ORF">SPBC342.04</name>
</gene>
<organism>
    <name type="scientific">Schizosaccharomyces pombe (strain 972 / ATCC 24843)</name>
    <name type="common">Fission yeast</name>
    <dbReference type="NCBI Taxonomy" id="284812"/>
    <lineage>
        <taxon>Eukaryota</taxon>
        <taxon>Fungi</taxon>
        <taxon>Dikarya</taxon>
        <taxon>Ascomycota</taxon>
        <taxon>Taphrinomycotina</taxon>
        <taxon>Schizosaccharomycetes</taxon>
        <taxon>Schizosaccharomycetales</taxon>
        <taxon>Schizosaccharomycetaceae</taxon>
        <taxon>Schizosaccharomyces</taxon>
    </lineage>
</organism>
<dbReference type="EMBL" id="CU329671">
    <property type="protein sequence ID" value="CAB46774.1"/>
    <property type="molecule type" value="Genomic_DNA"/>
</dbReference>
<dbReference type="PIR" id="T40277">
    <property type="entry name" value="T40277"/>
</dbReference>
<dbReference type="RefSeq" id="NP_596747.1">
    <property type="nucleotide sequence ID" value="NM_001023767.2"/>
</dbReference>
<dbReference type="SMR" id="Q9Y7Y6"/>
<dbReference type="BioGRID" id="277496">
    <property type="interactions" value="10"/>
</dbReference>
<dbReference type="ComplexPortal" id="CPX-9077">
    <property type="entry name" value="26S proteasome complex"/>
</dbReference>
<dbReference type="FunCoup" id="Q9Y7Y6">
    <property type="interactions" value="105"/>
</dbReference>
<dbReference type="STRING" id="284812.Q9Y7Y6"/>
<dbReference type="iPTMnet" id="Q9Y7Y6"/>
<dbReference type="PaxDb" id="4896-SPBC342.04.1"/>
<dbReference type="EnsemblFungi" id="SPBC342.04.1">
    <property type="protein sequence ID" value="SPBC342.04.1:pep"/>
    <property type="gene ID" value="SPBC342.04"/>
</dbReference>
<dbReference type="GeneID" id="2540980"/>
<dbReference type="KEGG" id="spo:2540980"/>
<dbReference type="PomBase" id="SPBC342.04">
    <property type="gene designation" value="rpn1301"/>
</dbReference>
<dbReference type="VEuPathDB" id="FungiDB:SPBC342.04"/>
<dbReference type="eggNOG" id="KOG3037">
    <property type="taxonomic scope" value="Eukaryota"/>
</dbReference>
<dbReference type="HOGENOM" id="CLU_041798_0_0_1"/>
<dbReference type="InParanoid" id="Q9Y7Y6"/>
<dbReference type="OMA" id="SNQRHFF"/>
<dbReference type="PhylomeDB" id="Q9Y7Y6"/>
<dbReference type="Reactome" id="R-SPO-1236978">
    <property type="pathway name" value="Cross-presentation of soluble exogenous antigens (endosomes)"/>
</dbReference>
<dbReference type="Reactome" id="R-SPO-350562">
    <property type="pathway name" value="Regulation of ornithine decarboxylase (ODC)"/>
</dbReference>
<dbReference type="Reactome" id="R-SPO-5687128">
    <property type="pathway name" value="MAPK6/MAPK4 signaling"/>
</dbReference>
<dbReference type="Reactome" id="R-SPO-5689603">
    <property type="pathway name" value="UCH proteinases"/>
</dbReference>
<dbReference type="Reactome" id="R-SPO-5689880">
    <property type="pathway name" value="Ub-specific processing proteases"/>
</dbReference>
<dbReference type="Reactome" id="R-SPO-68949">
    <property type="pathway name" value="Orc1 removal from chromatin"/>
</dbReference>
<dbReference type="Reactome" id="R-SPO-69017">
    <property type="pathway name" value="CDK-mediated phosphorylation and removal of Cdc6"/>
</dbReference>
<dbReference type="Reactome" id="R-SPO-69601">
    <property type="pathway name" value="Ubiquitin Mediated Degradation of Phosphorylated Cdc25A"/>
</dbReference>
<dbReference type="Reactome" id="R-SPO-75815">
    <property type="pathway name" value="Ubiquitin-dependent degradation of Cyclin D"/>
</dbReference>
<dbReference type="Reactome" id="R-SPO-8854050">
    <property type="pathway name" value="FBXL7 down-regulates AURKA during mitotic entry and in early mitosis"/>
</dbReference>
<dbReference type="Reactome" id="R-SPO-8948751">
    <property type="pathway name" value="Regulation of PTEN stability and activity"/>
</dbReference>
<dbReference type="Reactome" id="R-SPO-8951664">
    <property type="pathway name" value="Neddylation"/>
</dbReference>
<dbReference type="Reactome" id="R-SPO-9755511">
    <property type="pathway name" value="KEAP1-NFE2L2 pathway"/>
</dbReference>
<dbReference type="Reactome" id="R-SPO-983168">
    <property type="pathway name" value="Antigen processing: Ubiquitination &amp; Proteasome degradation"/>
</dbReference>
<dbReference type="Reactome" id="R-SPO-9907900">
    <property type="pathway name" value="Proteasome assembly"/>
</dbReference>
<dbReference type="PRO" id="PR:Q9Y7Y6"/>
<dbReference type="Proteomes" id="UP000002485">
    <property type="component" value="Chromosome II"/>
</dbReference>
<dbReference type="GO" id="GO:0005829">
    <property type="term" value="C:cytosol"/>
    <property type="evidence" value="ECO:0007005"/>
    <property type="project" value="PomBase"/>
</dbReference>
<dbReference type="GO" id="GO:0005634">
    <property type="term" value="C:nucleus"/>
    <property type="evidence" value="ECO:0007005"/>
    <property type="project" value="PomBase"/>
</dbReference>
<dbReference type="GO" id="GO:0008541">
    <property type="term" value="C:proteasome regulatory particle, lid subcomplex"/>
    <property type="evidence" value="ECO:0000314"/>
    <property type="project" value="PomBase"/>
</dbReference>
<dbReference type="GO" id="GO:0061133">
    <property type="term" value="F:endopeptidase activator activity"/>
    <property type="evidence" value="ECO:0000318"/>
    <property type="project" value="GO_Central"/>
</dbReference>
<dbReference type="GO" id="GO:0070628">
    <property type="term" value="F:proteasome binding"/>
    <property type="evidence" value="ECO:0000318"/>
    <property type="project" value="GO_Central"/>
</dbReference>
<dbReference type="GO" id="GO:0043161">
    <property type="term" value="P:proteasome-mediated ubiquitin-dependent protein catabolic process"/>
    <property type="evidence" value="ECO:0000305"/>
    <property type="project" value="PomBase"/>
</dbReference>
<dbReference type="CDD" id="cd13314">
    <property type="entry name" value="PH_Rpn13"/>
    <property type="match status" value="1"/>
</dbReference>
<dbReference type="Gene3D" id="1.10.2020.20">
    <property type="match status" value="1"/>
</dbReference>
<dbReference type="Gene3D" id="2.30.29.70">
    <property type="entry name" value="Proteasomal ubiquitin receptor Rpn13/ADRM1"/>
    <property type="match status" value="1"/>
</dbReference>
<dbReference type="InterPro" id="IPR044867">
    <property type="entry name" value="DEUBAD_dom"/>
</dbReference>
<dbReference type="InterPro" id="IPR006773">
    <property type="entry name" value="Rpn13/ADRM1"/>
</dbReference>
<dbReference type="InterPro" id="IPR044868">
    <property type="entry name" value="Rpn13/ADRM1_Pru"/>
</dbReference>
<dbReference type="InterPro" id="IPR038633">
    <property type="entry name" value="Rpn13/ADRM1_Pru_sf"/>
</dbReference>
<dbReference type="InterPro" id="IPR032368">
    <property type="entry name" value="RPN13_DEUBAD"/>
</dbReference>
<dbReference type="InterPro" id="IPR038108">
    <property type="entry name" value="RPN13_DEUBAD_sf"/>
</dbReference>
<dbReference type="PANTHER" id="PTHR12225">
    <property type="entry name" value="ADHESION REGULATING MOLECULE 1 110 KDA CELL MEMBRANE GLYCOPROTEIN"/>
    <property type="match status" value="1"/>
</dbReference>
<dbReference type="PANTHER" id="PTHR12225:SF0">
    <property type="entry name" value="PROTEASOMAL UBIQUITIN RECEPTOR ADRM1"/>
    <property type="match status" value="1"/>
</dbReference>
<dbReference type="Pfam" id="PF04683">
    <property type="entry name" value="Rpn13_ADRM1_Pru"/>
    <property type="match status" value="1"/>
</dbReference>
<dbReference type="Pfam" id="PF16550">
    <property type="entry name" value="RPN13_C"/>
    <property type="match status" value="1"/>
</dbReference>
<dbReference type="PROSITE" id="PS51916">
    <property type="entry name" value="DEUBAD"/>
    <property type="match status" value="1"/>
</dbReference>
<dbReference type="PROSITE" id="PS51917">
    <property type="entry name" value="PRU"/>
    <property type="match status" value="1"/>
</dbReference>
<accession>Q9Y7Y6</accession>
<comment type="function">
    <text evidence="6 9">Component of the 26S proteasome, a multiprotein complex involved in the ATP-dependent degradation of ubiquitinated proteins. This complex plays a key role in the maintenance of protein homeostasis by removing misfolded or damaged proteins, which could impair cellular functions, and by removing proteins whose functions are no longer required (PubMed:21098295). Therefore, the proteasome participates in numerous cellular processes, including cell cycle progression, apoptosis, or DNA damage repair. Within the complex, functions as a proteasomal ubiquitin receptor (Probable).</text>
</comment>
<comment type="subunit">
    <text evidence="6">Component of the 19S proteasome regulatory particle complex (PubMed:21098295). The 2 S.pombe rpn13 homologs, rpn1301 and rpn1302 are present at a 0.2-1 ratio (PubMed:21098295).</text>
</comment>
<comment type="subcellular location">
    <subcellularLocation>
        <location evidence="5">Cytoplasm</location>
    </subcellularLocation>
    <subcellularLocation>
        <location evidence="5">Nucleus</location>
    </subcellularLocation>
</comment>
<comment type="domain">
    <text evidence="1">The Pru (pleckstrin-like receptor for ubiquitin) domain mediates interactions with rpn2 and ubiquitin.</text>
</comment>
<comment type="similarity">
    <text evidence="8">Belongs to the ADRM1 family.</text>
</comment>
<keyword id="KW-0963">Cytoplasm</keyword>
<keyword id="KW-0539">Nucleus</keyword>
<keyword id="KW-0647">Proteasome</keyword>
<keyword id="KW-1185">Reference proteome</keyword>
<proteinExistence type="evidence at protein level"/>